<evidence type="ECO:0000255" key="1">
    <source>
        <dbReference type="HAMAP-Rule" id="MF_01631"/>
    </source>
</evidence>
<keyword id="KW-0012">Acyltransferase</keyword>
<keyword id="KW-0133">Cell shape</keyword>
<keyword id="KW-0961">Cell wall biogenesis/degradation</keyword>
<keyword id="KW-0963">Cytoplasm</keyword>
<keyword id="KW-0460">Magnesium</keyword>
<keyword id="KW-0479">Metal-binding</keyword>
<keyword id="KW-0511">Multifunctional enzyme</keyword>
<keyword id="KW-0548">Nucleotidyltransferase</keyword>
<keyword id="KW-0573">Peptidoglycan synthesis</keyword>
<keyword id="KW-1185">Reference proteome</keyword>
<keyword id="KW-0677">Repeat</keyword>
<keyword id="KW-0808">Transferase</keyword>
<reference key="1">
    <citation type="journal article" date="2002" name="Nature">
        <title>Genome sequence of the plant pathogen Ralstonia solanacearum.</title>
        <authorList>
            <person name="Salanoubat M."/>
            <person name="Genin S."/>
            <person name="Artiguenave F."/>
            <person name="Gouzy J."/>
            <person name="Mangenot S."/>
            <person name="Arlat M."/>
            <person name="Billault A."/>
            <person name="Brottier P."/>
            <person name="Camus J.-C."/>
            <person name="Cattolico L."/>
            <person name="Chandler M."/>
            <person name="Choisne N."/>
            <person name="Claudel-Renard C."/>
            <person name="Cunnac S."/>
            <person name="Demange N."/>
            <person name="Gaspin C."/>
            <person name="Lavie M."/>
            <person name="Moisan A."/>
            <person name="Robert C."/>
            <person name="Saurin W."/>
            <person name="Schiex T."/>
            <person name="Siguier P."/>
            <person name="Thebault P."/>
            <person name="Whalen M."/>
            <person name="Wincker P."/>
            <person name="Levy M."/>
            <person name="Weissenbach J."/>
            <person name="Boucher C.A."/>
        </authorList>
    </citation>
    <scope>NUCLEOTIDE SEQUENCE [LARGE SCALE GENOMIC DNA]</scope>
    <source>
        <strain>ATCC BAA-1114 / GMI1000</strain>
    </source>
</reference>
<proteinExistence type="inferred from homology"/>
<comment type="function">
    <text evidence="1">Catalyzes the last two sequential reactions in the de novo biosynthetic pathway for UDP-N-acetylglucosamine (UDP-GlcNAc). The C-terminal domain catalyzes the transfer of acetyl group from acetyl coenzyme A to glucosamine-1-phosphate (GlcN-1-P) to produce N-acetylglucosamine-1-phosphate (GlcNAc-1-P), which is converted into UDP-GlcNAc by the transfer of uridine 5-monophosphate (from uridine 5-triphosphate), a reaction catalyzed by the N-terminal domain.</text>
</comment>
<comment type="catalytic activity">
    <reaction evidence="1">
        <text>alpha-D-glucosamine 1-phosphate + acetyl-CoA = N-acetyl-alpha-D-glucosamine 1-phosphate + CoA + H(+)</text>
        <dbReference type="Rhea" id="RHEA:13725"/>
        <dbReference type="ChEBI" id="CHEBI:15378"/>
        <dbReference type="ChEBI" id="CHEBI:57287"/>
        <dbReference type="ChEBI" id="CHEBI:57288"/>
        <dbReference type="ChEBI" id="CHEBI:57776"/>
        <dbReference type="ChEBI" id="CHEBI:58516"/>
        <dbReference type="EC" id="2.3.1.157"/>
    </reaction>
</comment>
<comment type="catalytic activity">
    <reaction evidence="1">
        <text>N-acetyl-alpha-D-glucosamine 1-phosphate + UTP + H(+) = UDP-N-acetyl-alpha-D-glucosamine + diphosphate</text>
        <dbReference type="Rhea" id="RHEA:13509"/>
        <dbReference type="ChEBI" id="CHEBI:15378"/>
        <dbReference type="ChEBI" id="CHEBI:33019"/>
        <dbReference type="ChEBI" id="CHEBI:46398"/>
        <dbReference type="ChEBI" id="CHEBI:57705"/>
        <dbReference type="ChEBI" id="CHEBI:57776"/>
        <dbReference type="EC" id="2.7.7.23"/>
    </reaction>
</comment>
<comment type="cofactor">
    <cofactor evidence="1">
        <name>Mg(2+)</name>
        <dbReference type="ChEBI" id="CHEBI:18420"/>
    </cofactor>
    <text evidence="1">Binds 1 Mg(2+) ion per subunit.</text>
</comment>
<comment type="pathway">
    <text evidence="1">Nucleotide-sugar biosynthesis; UDP-N-acetyl-alpha-D-glucosamine biosynthesis; N-acetyl-alpha-D-glucosamine 1-phosphate from alpha-D-glucosamine 6-phosphate (route II): step 2/2.</text>
</comment>
<comment type="pathway">
    <text evidence="1">Nucleotide-sugar biosynthesis; UDP-N-acetyl-alpha-D-glucosamine biosynthesis; UDP-N-acetyl-alpha-D-glucosamine from N-acetyl-alpha-D-glucosamine 1-phosphate: step 1/1.</text>
</comment>
<comment type="pathway">
    <text evidence="1">Bacterial outer membrane biogenesis; LPS lipid A biosynthesis.</text>
</comment>
<comment type="subunit">
    <text evidence="1">Homotrimer.</text>
</comment>
<comment type="subcellular location">
    <subcellularLocation>
        <location evidence="1">Cytoplasm</location>
    </subcellularLocation>
</comment>
<comment type="similarity">
    <text evidence="1">In the N-terminal section; belongs to the N-acetylglucosamine-1-phosphate uridyltransferase family.</text>
</comment>
<comment type="similarity">
    <text evidence="1">In the C-terminal section; belongs to the transferase hexapeptide repeat family.</text>
</comment>
<name>GLMU_RALN1</name>
<dbReference type="EC" id="2.7.7.23" evidence="1"/>
<dbReference type="EC" id="2.3.1.157" evidence="1"/>
<dbReference type="EMBL" id="AL646052">
    <property type="protein sequence ID" value="CAD13705.1"/>
    <property type="molecule type" value="Genomic_DNA"/>
</dbReference>
<dbReference type="RefSeq" id="WP_011000144.1">
    <property type="nucleotide sequence ID" value="NC_003295.1"/>
</dbReference>
<dbReference type="SMR" id="Q8Y304"/>
<dbReference type="STRING" id="267608.RSc0177"/>
<dbReference type="EnsemblBacteria" id="CAD13705">
    <property type="protein sequence ID" value="CAD13705"/>
    <property type="gene ID" value="RSc0177"/>
</dbReference>
<dbReference type="KEGG" id="rso:RSc0177"/>
<dbReference type="PATRIC" id="fig|267608.8.peg.181"/>
<dbReference type="eggNOG" id="COG1207">
    <property type="taxonomic scope" value="Bacteria"/>
</dbReference>
<dbReference type="HOGENOM" id="CLU_029499_15_2_4"/>
<dbReference type="UniPathway" id="UPA00113">
    <property type="reaction ID" value="UER00532"/>
</dbReference>
<dbReference type="UniPathway" id="UPA00113">
    <property type="reaction ID" value="UER00533"/>
</dbReference>
<dbReference type="UniPathway" id="UPA00973"/>
<dbReference type="Proteomes" id="UP000001436">
    <property type="component" value="Chromosome"/>
</dbReference>
<dbReference type="GO" id="GO:0005737">
    <property type="term" value="C:cytoplasm"/>
    <property type="evidence" value="ECO:0007669"/>
    <property type="project" value="UniProtKB-SubCell"/>
</dbReference>
<dbReference type="GO" id="GO:0016020">
    <property type="term" value="C:membrane"/>
    <property type="evidence" value="ECO:0007669"/>
    <property type="project" value="GOC"/>
</dbReference>
<dbReference type="GO" id="GO:0019134">
    <property type="term" value="F:glucosamine-1-phosphate N-acetyltransferase activity"/>
    <property type="evidence" value="ECO:0007669"/>
    <property type="project" value="UniProtKB-UniRule"/>
</dbReference>
<dbReference type="GO" id="GO:0000287">
    <property type="term" value="F:magnesium ion binding"/>
    <property type="evidence" value="ECO:0007669"/>
    <property type="project" value="UniProtKB-UniRule"/>
</dbReference>
<dbReference type="GO" id="GO:0003977">
    <property type="term" value="F:UDP-N-acetylglucosamine diphosphorylase activity"/>
    <property type="evidence" value="ECO:0007669"/>
    <property type="project" value="UniProtKB-UniRule"/>
</dbReference>
<dbReference type="GO" id="GO:0000902">
    <property type="term" value="P:cell morphogenesis"/>
    <property type="evidence" value="ECO:0007669"/>
    <property type="project" value="UniProtKB-UniRule"/>
</dbReference>
<dbReference type="GO" id="GO:0071555">
    <property type="term" value="P:cell wall organization"/>
    <property type="evidence" value="ECO:0007669"/>
    <property type="project" value="UniProtKB-KW"/>
</dbReference>
<dbReference type="GO" id="GO:0009245">
    <property type="term" value="P:lipid A biosynthetic process"/>
    <property type="evidence" value="ECO:0007669"/>
    <property type="project" value="UniProtKB-UniRule"/>
</dbReference>
<dbReference type="GO" id="GO:0009252">
    <property type="term" value="P:peptidoglycan biosynthetic process"/>
    <property type="evidence" value="ECO:0007669"/>
    <property type="project" value="UniProtKB-UniRule"/>
</dbReference>
<dbReference type="GO" id="GO:0008360">
    <property type="term" value="P:regulation of cell shape"/>
    <property type="evidence" value="ECO:0007669"/>
    <property type="project" value="UniProtKB-KW"/>
</dbReference>
<dbReference type="GO" id="GO:0006048">
    <property type="term" value="P:UDP-N-acetylglucosamine biosynthetic process"/>
    <property type="evidence" value="ECO:0007669"/>
    <property type="project" value="UniProtKB-UniPathway"/>
</dbReference>
<dbReference type="CDD" id="cd02540">
    <property type="entry name" value="GT2_GlmU_N_bac"/>
    <property type="match status" value="1"/>
</dbReference>
<dbReference type="CDD" id="cd03353">
    <property type="entry name" value="LbH_GlmU_C"/>
    <property type="match status" value="1"/>
</dbReference>
<dbReference type="Gene3D" id="2.160.10.10">
    <property type="entry name" value="Hexapeptide repeat proteins"/>
    <property type="match status" value="1"/>
</dbReference>
<dbReference type="Gene3D" id="3.90.550.10">
    <property type="entry name" value="Spore Coat Polysaccharide Biosynthesis Protein SpsA, Chain A"/>
    <property type="match status" value="1"/>
</dbReference>
<dbReference type="HAMAP" id="MF_01631">
    <property type="entry name" value="GlmU"/>
    <property type="match status" value="1"/>
</dbReference>
<dbReference type="InterPro" id="IPR005882">
    <property type="entry name" value="Bifunctional_GlmU"/>
</dbReference>
<dbReference type="InterPro" id="IPR050065">
    <property type="entry name" value="GlmU-like"/>
</dbReference>
<dbReference type="InterPro" id="IPR038009">
    <property type="entry name" value="GlmU_C_LbH"/>
</dbReference>
<dbReference type="InterPro" id="IPR001451">
    <property type="entry name" value="Hexapep"/>
</dbReference>
<dbReference type="InterPro" id="IPR025877">
    <property type="entry name" value="MobA-like_NTP_Trfase"/>
</dbReference>
<dbReference type="InterPro" id="IPR029044">
    <property type="entry name" value="Nucleotide-diphossugar_trans"/>
</dbReference>
<dbReference type="InterPro" id="IPR011004">
    <property type="entry name" value="Trimer_LpxA-like_sf"/>
</dbReference>
<dbReference type="NCBIfam" id="TIGR01173">
    <property type="entry name" value="glmU"/>
    <property type="match status" value="1"/>
</dbReference>
<dbReference type="PANTHER" id="PTHR43584:SF3">
    <property type="entry name" value="BIFUNCTIONAL PROTEIN GLMU"/>
    <property type="match status" value="1"/>
</dbReference>
<dbReference type="PANTHER" id="PTHR43584">
    <property type="entry name" value="NUCLEOTIDYL TRANSFERASE"/>
    <property type="match status" value="1"/>
</dbReference>
<dbReference type="Pfam" id="PF00132">
    <property type="entry name" value="Hexapep"/>
    <property type="match status" value="2"/>
</dbReference>
<dbReference type="Pfam" id="PF12804">
    <property type="entry name" value="NTP_transf_3"/>
    <property type="match status" value="1"/>
</dbReference>
<dbReference type="SUPFAM" id="SSF53448">
    <property type="entry name" value="Nucleotide-diphospho-sugar transferases"/>
    <property type="match status" value="1"/>
</dbReference>
<dbReference type="SUPFAM" id="SSF51161">
    <property type="entry name" value="Trimeric LpxA-like enzymes"/>
    <property type="match status" value="1"/>
</dbReference>
<protein>
    <recommendedName>
        <fullName evidence="1">Bifunctional protein GlmU</fullName>
    </recommendedName>
    <domain>
        <recommendedName>
            <fullName evidence="1">UDP-N-acetylglucosamine pyrophosphorylase</fullName>
            <ecNumber evidence="1">2.7.7.23</ecNumber>
        </recommendedName>
        <alternativeName>
            <fullName evidence="1">N-acetylglucosamine-1-phosphate uridyltransferase</fullName>
        </alternativeName>
    </domain>
    <domain>
        <recommendedName>
            <fullName evidence="1">Glucosamine-1-phosphate N-acetyltransferase</fullName>
            <ecNumber evidence="1">2.3.1.157</ecNumber>
        </recommendedName>
    </domain>
</protein>
<organism>
    <name type="scientific">Ralstonia nicotianae (strain ATCC BAA-1114 / GMI1000)</name>
    <name type="common">Ralstonia solanacearum</name>
    <dbReference type="NCBI Taxonomy" id="267608"/>
    <lineage>
        <taxon>Bacteria</taxon>
        <taxon>Pseudomonadati</taxon>
        <taxon>Pseudomonadota</taxon>
        <taxon>Betaproteobacteria</taxon>
        <taxon>Burkholderiales</taxon>
        <taxon>Burkholderiaceae</taxon>
        <taxon>Ralstonia</taxon>
        <taxon>Ralstonia solanacearum species complex</taxon>
    </lineage>
</organism>
<gene>
    <name evidence="1" type="primary">glmU</name>
    <name type="ordered locus">RSc0177</name>
    <name type="ORF">RS01048</name>
</gene>
<sequence length="455" mass="48670">MNIVILAAGLGKRMRSALPKVLHPLAGKPLLAHVIETARSLSPTRLVVVVGHGGDRVRDMVGAPDVTFATQDQQLGTGHAVMQALDQLDDTVPTLVLYGDVPLTRAETLNALVGAAGQDHLGVLTVHLDDPTGYGRIVRDATGRITRIVEQKDANETQLAIHEVNTGILVCPTARLKTWLATLRNDNAQGEYYLTDVIERAASEGLPITSAHPLAEWETLGVNSKVQLAELERIHQRNLAQQLLEDGVTLIDPARIDIRGRLTCGRDVVIDIDCIFEGNVTLGDGVRIGAHAVIRDAAIQAGAEILPFCHIEQATVGAQSRIGPYARLRPGTELAEDVHIGNFVEVKNSQIAAHSKANHLAYVGDATVGSRVNIGAGTITCNYDGANKFRTIIEDDAFIGSDTQLVAPVRVGRGATLGAGTTLTKDAPEGQLTVSRARQTTVNGWQRPVKQKKDA</sequence>
<accession>Q8Y304</accession>
<feature type="chain" id="PRO_0000233830" description="Bifunctional protein GlmU">
    <location>
        <begin position="1"/>
        <end position="455"/>
    </location>
</feature>
<feature type="region of interest" description="Pyrophosphorylase" evidence="1">
    <location>
        <begin position="1"/>
        <end position="225"/>
    </location>
</feature>
<feature type="region of interest" description="Linker" evidence="1">
    <location>
        <begin position="226"/>
        <end position="246"/>
    </location>
</feature>
<feature type="region of interest" description="N-acetyltransferase" evidence="1">
    <location>
        <begin position="247"/>
        <end position="455"/>
    </location>
</feature>
<feature type="active site" description="Proton acceptor" evidence="1">
    <location>
        <position position="359"/>
    </location>
</feature>
<feature type="binding site" evidence="1">
    <location>
        <begin position="6"/>
        <end position="9"/>
    </location>
    <ligand>
        <name>UDP-N-acetyl-alpha-D-glucosamine</name>
        <dbReference type="ChEBI" id="CHEBI:57705"/>
    </ligand>
</feature>
<feature type="binding site" evidence="1">
    <location>
        <position position="20"/>
    </location>
    <ligand>
        <name>UDP-N-acetyl-alpha-D-glucosamine</name>
        <dbReference type="ChEBI" id="CHEBI:57705"/>
    </ligand>
</feature>
<feature type="binding site" evidence="1">
    <location>
        <position position="71"/>
    </location>
    <ligand>
        <name>UDP-N-acetyl-alpha-D-glucosamine</name>
        <dbReference type="ChEBI" id="CHEBI:57705"/>
    </ligand>
</feature>
<feature type="binding site" evidence="1">
    <location>
        <begin position="76"/>
        <end position="77"/>
    </location>
    <ligand>
        <name>UDP-N-acetyl-alpha-D-glucosamine</name>
        <dbReference type="ChEBI" id="CHEBI:57705"/>
    </ligand>
</feature>
<feature type="binding site" evidence="1">
    <location>
        <begin position="98"/>
        <end position="100"/>
    </location>
    <ligand>
        <name>UDP-N-acetyl-alpha-D-glucosamine</name>
        <dbReference type="ChEBI" id="CHEBI:57705"/>
    </ligand>
</feature>
<feature type="binding site" evidence="1">
    <location>
        <position position="100"/>
    </location>
    <ligand>
        <name>Mg(2+)</name>
        <dbReference type="ChEBI" id="CHEBI:18420"/>
    </ligand>
</feature>
<feature type="binding site" evidence="1">
    <location>
        <position position="135"/>
    </location>
    <ligand>
        <name>UDP-N-acetyl-alpha-D-glucosamine</name>
        <dbReference type="ChEBI" id="CHEBI:57705"/>
    </ligand>
</feature>
<feature type="binding site" evidence="1">
    <location>
        <position position="150"/>
    </location>
    <ligand>
        <name>UDP-N-acetyl-alpha-D-glucosamine</name>
        <dbReference type="ChEBI" id="CHEBI:57705"/>
    </ligand>
</feature>
<feature type="binding site" evidence="1">
    <location>
        <position position="165"/>
    </location>
    <ligand>
        <name>UDP-N-acetyl-alpha-D-glucosamine</name>
        <dbReference type="ChEBI" id="CHEBI:57705"/>
    </ligand>
</feature>
<feature type="binding site" evidence="1">
    <location>
        <position position="223"/>
    </location>
    <ligand>
        <name>Mg(2+)</name>
        <dbReference type="ChEBI" id="CHEBI:18420"/>
    </ligand>
</feature>
<feature type="binding site" evidence="1">
    <location>
        <position position="223"/>
    </location>
    <ligand>
        <name>UDP-N-acetyl-alpha-D-glucosamine</name>
        <dbReference type="ChEBI" id="CHEBI:57705"/>
    </ligand>
</feature>
<feature type="binding site" evidence="1">
    <location>
        <position position="329"/>
    </location>
    <ligand>
        <name>UDP-N-acetyl-alpha-D-glucosamine</name>
        <dbReference type="ChEBI" id="CHEBI:57705"/>
    </ligand>
</feature>
<feature type="binding site" evidence="1">
    <location>
        <position position="347"/>
    </location>
    <ligand>
        <name>UDP-N-acetyl-alpha-D-glucosamine</name>
        <dbReference type="ChEBI" id="CHEBI:57705"/>
    </ligand>
</feature>
<feature type="binding site" evidence="1">
    <location>
        <position position="362"/>
    </location>
    <ligand>
        <name>UDP-N-acetyl-alpha-D-glucosamine</name>
        <dbReference type="ChEBI" id="CHEBI:57705"/>
    </ligand>
</feature>
<feature type="binding site" evidence="1">
    <location>
        <position position="373"/>
    </location>
    <ligand>
        <name>UDP-N-acetyl-alpha-D-glucosamine</name>
        <dbReference type="ChEBI" id="CHEBI:57705"/>
    </ligand>
</feature>
<feature type="binding site" evidence="1">
    <location>
        <position position="376"/>
    </location>
    <ligand>
        <name>acetyl-CoA</name>
        <dbReference type="ChEBI" id="CHEBI:57288"/>
    </ligand>
</feature>
<feature type="binding site" evidence="1">
    <location>
        <begin position="382"/>
        <end position="383"/>
    </location>
    <ligand>
        <name>acetyl-CoA</name>
        <dbReference type="ChEBI" id="CHEBI:57288"/>
    </ligand>
</feature>
<feature type="binding site" evidence="1">
    <location>
        <position position="401"/>
    </location>
    <ligand>
        <name>acetyl-CoA</name>
        <dbReference type="ChEBI" id="CHEBI:57288"/>
    </ligand>
</feature>
<feature type="binding site" evidence="1">
    <location>
        <position position="419"/>
    </location>
    <ligand>
        <name>acetyl-CoA</name>
        <dbReference type="ChEBI" id="CHEBI:57288"/>
    </ligand>
</feature>
<feature type="binding site" evidence="1">
    <location>
        <position position="436"/>
    </location>
    <ligand>
        <name>acetyl-CoA</name>
        <dbReference type="ChEBI" id="CHEBI:57288"/>
    </ligand>
</feature>